<dbReference type="EC" id="4.3.2.1" evidence="1"/>
<dbReference type="EMBL" id="CP000117">
    <property type="protein sequence ID" value="ABA21429.1"/>
    <property type="molecule type" value="Genomic_DNA"/>
</dbReference>
<dbReference type="SMR" id="Q3MC57"/>
<dbReference type="STRING" id="240292.Ava_1807"/>
<dbReference type="KEGG" id="ava:Ava_1807"/>
<dbReference type="eggNOG" id="COG0165">
    <property type="taxonomic scope" value="Bacteria"/>
</dbReference>
<dbReference type="HOGENOM" id="CLU_027272_2_3_3"/>
<dbReference type="UniPathway" id="UPA00068">
    <property type="reaction ID" value="UER00114"/>
</dbReference>
<dbReference type="Proteomes" id="UP000002533">
    <property type="component" value="Chromosome"/>
</dbReference>
<dbReference type="GO" id="GO:0005829">
    <property type="term" value="C:cytosol"/>
    <property type="evidence" value="ECO:0007669"/>
    <property type="project" value="TreeGrafter"/>
</dbReference>
<dbReference type="GO" id="GO:0004056">
    <property type="term" value="F:argininosuccinate lyase activity"/>
    <property type="evidence" value="ECO:0007669"/>
    <property type="project" value="UniProtKB-UniRule"/>
</dbReference>
<dbReference type="GO" id="GO:0042450">
    <property type="term" value="P:arginine biosynthetic process via ornithine"/>
    <property type="evidence" value="ECO:0007669"/>
    <property type="project" value="InterPro"/>
</dbReference>
<dbReference type="GO" id="GO:0006526">
    <property type="term" value="P:L-arginine biosynthetic process"/>
    <property type="evidence" value="ECO:0007669"/>
    <property type="project" value="UniProtKB-UniRule"/>
</dbReference>
<dbReference type="CDD" id="cd01359">
    <property type="entry name" value="Argininosuccinate_lyase"/>
    <property type="match status" value="1"/>
</dbReference>
<dbReference type="FunFam" id="1.10.275.10:FF:000002">
    <property type="entry name" value="Argininosuccinate lyase"/>
    <property type="match status" value="1"/>
</dbReference>
<dbReference type="FunFam" id="1.10.40.30:FF:000001">
    <property type="entry name" value="Argininosuccinate lyase"/>
    <property type="match status" value="1"/>
</dbReference>
<dbReference type="FunFam" id="1.20.200.10:FF:000015">
    <property type="entry name" value="argininosuccinate lyase isoform X2"/>
    <property type="match status" value="1"/>
</dbReference>
<dbReference type="Gene3D" id="1.10.40.30">
    <property type="entry name" value="Fumarase/aspartase (C-terminal domain)"/>
    <property type="match status" value="1"/>
</dbReference>
<dbReference type="Gene3D" id="1.20.200.10">
    <property type="entry name" value="Fumarase/aspartase (Central domain)"/>
    <property type="match status" value="1"/>
</dbReference>
<dbReference type="Gene3D" id="1.10.275.10">
    <property type="entry name" value="Fumarase/aspartase (N-terminal domain)"/>
    <property type="match status" value="1"/>
</dbReference>
<dbReference type="HAMAP" id="MF_00006">
    <property type="entry name" value="Arg_succ_lyase"/>
    <property type="match status" value="1"/>
</dbReference>
<dbReference type="InterPro" id="IPR029419">
    <property type="entry name" value="Arg_succ_lyase_C"/>
</dbReference>
<dbReference type="InterPro" id="IPR009049">
    <property type="entry name" value="Argininosuccinate_lyase"/>
</dbReference>
<dbReference type="InterPro" id="IPR024083">
    <property type="entry name" value="Fumarase/histidase_N"/>
</dbReference>
<dbReference type="InterPro" id="IPR020557">
    <property type="entry name" value="Fumarate_lyase_CS"/>
</dbReference>
<dbReference type="InterPro" id="IPR000362">
    <property type="entry name" value="Fumarate_lyase_fam"/>
</dbReference>
<dbReference type="InterPro" id="IPR022761">
    <property type="entry name" value="Fumarate_lyase_N"/>
</dbReference>
<dbReference type="InterPro" id="IPR008948">
    <property type="entry name" value="L-Aspartase-like"/>
</dbReference>
<dbReference type="NCBIfam" id="TIGR00838">
    <property type="entry name" value="argH"/>
    <property type="match status" value="1"/>
</dbReference>
<dbReference type="PANTHER" id="PTHR43814">
    <property type="entry name" value="ARGININOSUCCINATE LYASE"/>
    <property type="match status" value="1"/>
</dbReference>
<dbReference type="PANTHER" id="PTHR43814:SF1">
    <property type="entry name" value="ARGININOSUCCINATE LYASE"/>
    <property type="match status" value="1"/>
</dbReference>
<dbReference type="Pfam" id="PF14698">
    <property type="entry name" value="ASL_C2"/>
    <property type="match status" value="1"/>
</dbReference>
<dbReference type="Pfam" id="PF00206">
    <property type="entry name" value="Lyase_1"/>
    <property type="match status" value="1"/>
</dbReference>
<dbReference type="PRINTS" id="PR00145">
    <property type="entry name" value="ARGSUCLYASE"/>
</dbReference>
<dbReference type="PRINTS" id="PR00149">
    <property type="entry name" value="FUMRATELYASE"/>
</dbReference>
<dbReference type="SUPFAM" id="SSF48557">
    <property type="entry name" value="L-aspartase-like"/>
    <property type="match status" value="1"/>
</dbReference>
<dbReference type="PROSITE" id="PS00163">
    <property type="entry name" value="FUMARATE_LYASES"/>
    <property type="match status" value="1"/>
</dbReference>
<evidence type="ECO:0000255" key="1">
    <source>
        <dbReference type="HAMAP-Rule" id="MF_00006"/>
    </source>
</evidence>
<organism>
    <name type="scientific">Trichormus variabilis (strain ATCC 29413 / PCC 7937)</name>
    <name type="common">Anabaena variabilis</name>
    <dbReference type="NCBI Taxonomy" id="240292"/>
    <lineage>
        <taxon>Bacteria</taxon>
        <taxon>Bacillati</taxon>
        <taxon>Cyanobacteriota</taxon>
        <taxon>Cyanophyceae</taxon>
        <taxon>Nostocales</taxon>
        <taxon>Nostocaceae</taxon>
        <taxon>Trichormus</taxon>
    </lineage>
</organism>
<protein>
    <recommendedName>
        <fullName evidence="1">Argininosuccinate lyase</fullName>
        <shortName evidence="1">ASAL</shortName>
        <ecNumber evidence="1">4.3.2.1</ecNumber>
    </recommendedName>
    <alternativeName>
        <fullName evidence="1">Arginosuccinase</fullName>
    </alternativeName>
</protein>
<proteinExistence type="inferred from homology"/>
<accession>Q3MC57</accession>
<sequence length="461" mass="51627">MTEKQTWSQRFESALHPAIALFNASISFDIELIEYDLTGSQAHAQMLAHTGIISPAEGEQLVAGLEQIREEYRQGKFQPGIDAEDVHFAVERRLTEIVGDVGKKLHTARSRNDQVGTDTRLYLRDQISQIKTQLREFQRVLLDIAEQNVETLIPGYTHLQRAQPVSLAHHLLAYFHMAQRDWERLGDVYRRVNISPLGCGALAGTTFPIDRHYTAKLLQFERIYENSLDGVSDRDFAIEFLCAASLIMVHLSRLSEEIILWASEEFRFVTLKDSCATGSSIMPQKKNPDVPELVRGKTGRVFGHLQAMLVIMKGLPLAYNKDLQEDKEGLFDSVNTVKACLEAMTILLQEGLEFRTQRLAEAVTQDFSNATDVADYLAARGVPFREAYNIVGKVVKTSIAAGKLLKDLTLEEWQEIHPAFATDIYEAISPRQVVAARNSYGGTGFAQVSKAVSAAREEIGE</sequence>
<keyword id="KW-0028">Amino-acid biosynthesis</keyword>
<keyword id="KW-0055">Arginine biosynthesis</keyword>
<keyword id="KW-0963">Cytoplasm</keyword>
<keyword id="KW-0456">Lyase</keyword>
<name>ARLY_TRIV2</name>
<feature type="chain" id="PRO_0000240709" description="Argininosuccinate lyase">
    <location>
        <begin position="1"/>
        <end position="461"/>
    </location>
</feature>
<gene>
    <name evidence="1" type="primary">argH</name>
    <name type="ordered locus">Ava_1807</name>
</gene>
<comment type="catalytic activity">
    <reaction evidence="1">
        <text>2-(N(omega)-L-arginino)succinate = fumarate + L-arginine</text>
        <dbReference type="Rhea" id="RHEA:24020"/>
        <dbReference type="ChEBI" id="CHEBI:29806"/>
        <dbReference type="ChEBI" id="CHEBI:32682"/>
        <dbReference type="ChEBI" id="CHEBI:57472"/>
        <dbReference type="EC" id="4.3.2.1"/>
    </reaction>
</comment>
<comment type="pathway">
    <text evidence="1">Amino-acid biosynthesis; L-arginine biosynthesis; L-arginine from L-ornithine and carbamoyl phosphate: step 3/3.</text>
</comment>
<comment type="subcellular location">
    <subcellularLocation>
        <location evidence="1">Cytoplasm</location>
    </subcellularLocation>
</comment>
<comment type="similarity">
    <text evidence="1">Belongs to the lyase 1 family. Argininosuccinate lyase subfamily.</text>
</comment>
<reference key="1">
    <citation type="journal article" date="2014" name="Stand. Genomic Sci.">
        <title>Complete genome sequence of Anabaena variabilis ATCC 29413.</title>
        <authorList>
            <person name="Thiel T."/>
            <person name="Pratte B.S."/>
            <person name="Zhong J."/>
            <person name="Goodwin L."/>
            <person name="Copeland A."/>
            <person name="Lucas S."/>
            <person name="Han C."/>
            <person name="Pitluck S."/>
            <person name="Land M.L."/>
            <person name="Kyrpides N.C."/>
            <person name="Woyke T."/>
        </authorList>
    </citation>
    <scope>NUCLEOTIDE SEQUENCE [LARGE SCALE GENOMIC DNA]</scope>
    <source>
        <strain>ATCC 29413 / PCC 7937</strain>
    </source>
</reference>